<proteinExistence type="evidence at protein level"/>
<sequence length="219" mass="25169">MESGARPIGSSCSSPAALSREYKLVMLGAGGVGKSAMTMQFISHRFPEDHDPTIEDAYKIRIRIDDEPANLDILDTAGQAEFTAMRDQYMRAGEGFIICYSITDRRSFHEVREFKQLIYRVRRTDDTPVVLVGNKSDLKQLRQVSKEEGLSLAREFSCPFFETSAAYRYYIDDVFHALVREIRKKEKELVLAMEKKAKPKNSVWKRLKSPFRRKKDSVT</sequence>
<comment type="function">
    <text evidence="1">Plays a crucial role in coupling NGF stimulation to the activation of both EPHB2 and MAPK14 signaling pathways and in NGF-dependent neuronal differentiation. Involved in ELK1 transactivation through the Ras-MAPK signaling cascade that mediates a wide variety of cellular functions, including cell proliferation, survival, and differentiation (By similarity).</text>
</comment>
<comment type="catalytic activity">
    <reaction evidence="2">
        <text>GTP + H2O = GDP + phosphate + H(+)</text>
        <dbReference type="Rhea" id="RHEA:19669"/>
        <dbReference type="ChEBI" id="CHEBI:15377"/>
        <dbReference type="ChEBI" id="CHEBI:15378"/>
        <dbReference type="ChEBI" id="CHEBI:37565"/>
        <dbReference type="ChEBI" id="CHEBI:43474"/>
        <dbReference type="ChEBI" id="CHEBI:58189"/>
        <dbReference type="EC" id="3.6.5.2"/>
    </reaction>
</comment>
<comment type="activity regulation">
    <text evidence="1">Alternates between an inactive form bound to GDP and an active form bound to GTP.</text>
</comment>
<comment type="subunit">
    <text evidence="1 3">Interacts with AFDN, the C-terminal domain of RALGDS and RLF, but not with RIN1 and PIK3CA. RLF binds exclusively to the active GTP-bound form. Strongly interacts with BRAF, but only weakly with RAF1. BARF and RAF1 association is dependent upon the GTP-bound state (By similarity). Interacts with RGL3.</text>
</comment>
<comment type="subcellular location">
    <subcellularLocation>
        <location>Cell membrane</location>
    </subcellularLocation>
</comment>
<comment type="tissue specificity">
    <text>Expressed in many tissues.</text>
</comment>
<comment type="miscellaneous">
    <text evidence="1">Stimulation of the NGF and EGF receptor signaling pathways results in rapid and prolonged activation.</text>
</comment>
<comment type="miscellaneous">
    <text evidence="1">Shows rapid uncatalyzed guanine nucleotide dissociation rates, which are very much 10-fold faster than those of most Ras subfamily members.</text>
</comment>
<comment type="similarity">
    <text evidence="4">Belongs to the small GTPase superfamily. Ras family.</text>
</comment>
<name>RIT1_MOUSE</name>
<feature type="chain" id="PRO_0000082726" description="GTP-binding protein Rit1">
    <location>
        <begin position="1"/>
        <end position="219"/>
    </location>
</feature>
<feature type="binding site" evidence="1">
    <location>
        <begin position="28"/>
        <end position="35"/>
    </location>
    <ligand>
        <name>GTP</name>
        <dbReference type="ChEBI" id="CHEBI:37565"/>
    </ligand>
</feature>
<feature type="binding site" evidence="1">
    <location>
        <begin position="75"/>
        <end position="79"/>
    </location>
    <ligand>
        <name>GTP</name>
        <dbReference type="ChEBI" id="CHEBI:37565"/>
    </ligand>
</feature>
<feature type="binding site" evidence="1">
    <location>
        <begin position="134"/>
        <end position="137"/>
    </location>
    <ligand>
        <name>GTP</name>
        <dbReference type="ChEBI" id="CHEBI:37565"/>
    </ligand>
</feature>
<keyword id="KW-1003">Cell membrane</keyword>
<keyword id="KW-0342">GTP-binding</keyword>
<keyword id="KW-0378">Hydrolase</keyword>
<keyword id="KW-0472">Membrane</keyword>
<keyword id="KW-0547">Nucleotide-binding</keyword>
<keyword id="KW-1185">Reference proteome</keyword>
<protein>
    <recommendedName>
        <fullName>GTP-binding protein Rit1</fullName>
        <ecNumber evidence="2">3.6.5.2</ecNumber>
    </recommendedName>
    <alternativeName>
        <fullName>Ras-like protein expressed in many tissues</fullName>
    </alternativeName>
    <alternativeName>
        <fullName>Ras-like without CAAX protein 1</fullName>
    </alternativeName>
</protein>
<organism>
    <name type="scientific">Mus musculus</name>
    <name type="common">Mouse</name>
    <dbReference type="NCBI Taxonomy" id="10090"/>
    <lineage>
        <taxon>Eukaryota</taxon>
        <taxon>Metazoa</taxon>
        <taxon>Chordata</taxon>
        <taxon>Craniata</taxon>
        <taxon>Vertebrata</taxon>
        <taxon>Euteleostomi</taxon>
        <taxon>Mammalia</taxon>
        <taxon>Eutheria</taxon>
        <taxon>Euarchontoglires</taxon>
        <taxon>Glires</taxon>
        <taxon>Rodentia</taxon>
        <taxon>Myomorpha</taxon>
        <taxon>Muroidea</taxon>
        <taxon>Muridae</taxon>
        <taxon>Murinae</taxon>
        <taxon>Mus</taxon>
        <taxon>Mus</taxon>
    </lineage>
</organism>
<accession>P70426</accession>
<gene>
    <name type="primary">Rit1</name>
    <name type="synonym">Rit</name>
</gene>
<reference key="1">
    <citation type="journal article" date="1996" name="J. Neurosci.">
        <title>Rin, a neuron-specific and calmodulin-binding small G-protein, and Rit define a novel subfamily of ras proteins.</title>
        <authorList>
            <person name="Lee C.H.J."/>
            <person name="Della N.G."/>
            <person name="Chew C.E."/>
            <person name="Zack D.J."/>
        </authorList>
    </citation>
    <scope>NUCLEOTIDE SEQUENCE [MRNA]</scope>
    <source>
        <tissue>Retina</tissue>
    </source>
</reference>
<reference key="2">
    <citation type="journal article" date="2005" name="Science">
        <title>The transcriptional landscape of the mammalian genome.</title>
        <authorList>
            <person name="Carninci P."/>
            <person name="Kasukawa T."/>
            <person name="Katayama S."/>
            <person name="Gough J."/>
            <person name="Frith M.C."/>
            <person name="Maeda N."/>
            <person name="Oyama R."/>
            <person name="Ravasi T."/>
            <person name="Lenhard B."/>
            <person name="Wells C."/>
            <person name="Kodzius R."/>
            <person name="Shimokawa K."/>
            <person name="Bajic V.B."/>
            <person name="Brenner S.E."/>
            <person name="Batalov S."/>
            <person name="Forrest A.R."/>
            <person name="Zavolan M."/>
            <person name="Davis M.J."/>
            <person name="Wilming L.G."/>
            <person name="Aidinis V."/>
            <person name="Allen J.E."/>
            <person name="Ambesi-Impiombato A."/>
            <person name="Apweiler R."/>
            <person name="Aturaliya R.N."/>
            <person name="Bailey T.L."/>
            <person name="Bansal M."/>
            <person name="Baxter L."/>
            <person name="Beisel K.W."/>
            <person name="Bersano T."/>
            <person name="Bono H."/>
            <person name="Chalk A.M."/>
            <person name="Chiu K.P."/>
            <person name="Choudhary V."/>
            <person name="Christoffels A."/>
            <person name="Clutterbuck D.R."/>
            <person name="Crowe M.L."/>
            <person name="Dalla E."/>
            <person name="Dalrymple B.P."/>
            <person name="de Bono B."/>
            <person name="Della Gatta G."/>
            <person name="di Bernardo D."/>
            <person name="Down T."/>
            <person name="Engstrom P."/>
            <person name="Fagiolini M."/>
            <person name="Faulkner G."/>
            <person name="Fletcher C.F."/>
            <person name="Fukushima T."/>
            <person name="Furuno M."/>
            <person name="Futaki S."/>
            <person name="Gariboldi M."/>
            <person name="Georgii-Hemming P."/>
            <person name="Gingeras T.R."/>
            <person name="Gojobori T."/>
            <person name="Green R.E."/>
            <person name="Gustincich S."/>
            <person name="Harbers M."/>
            <person name="Hayashi Y."/>
            <person name="Hensch T.K."/>
            <person name="Hirokawa N."/>
            <person name="Hill D."/>
            <person name="Huminiecki L."/>
            <person name="Iacono M."/>
            <person name="Ikeo K."/>
            <person name="Iwama A."/>
            <person name="Ishikawa T."/>
            <person name="Jakt M."/>
            <person name="Kanapin A."/>
            <person name="Katoh M."/>
            <person name="Kawasawa Y."/>
            <person name="Kelso J."/>
            <person name="Kitamura H."/>
            <person name="Kitano H."/>
            <person name="Kollias G."/>
            <person name="Krishnan S.P."/>
            <person name="Kruger A."/>
            <person name="Kummerfeld S.K."/>
            <person name="Kurochkin I.V."/>
            <person name="Lareau L.F."/>
            <person name="Lazarevic D."/>
            <person name="Lipovich L."/>
            <person name="Liu J."/>
            <person name="Liuni S."/>
            <person name="McWilliam S."/>
            <person name="Madan Babu M."/>
            <person name="Madera M."/>
            <person name="Marchionni L."/>
            <person name="Matsuda H."/>
            <person name="Matsuzawa S."/>
            <person name="Miki H."/>
            <person name="Mignone F."/>
            <person name="Miyake S."/>
            <person name="Morris K."/>
            <person name="Mottagui-Tabar S."/>
            <person name="Mulder N."/>
            <person name="Nakano N."/>
            <person name="Nakauchi H."/>
            <person name="Ng P."/>
            <person name="Nilsson R."/>
            <person name="Nishiguchi S."/>
            <person name="Nishikawa S."/>
            <person name="Nori F."/>
            <person name="Ohara O."/>
            <person name="Okazaki Y."/>
            <person name="Orlando V."/>
            <person name="Pang K.C."/>
            <person name="Pavan W.J."/>
            <person name="Pavesi G."/>
            <person name="Pesole G."/>
            <person name="Petrovsky N."/>
            <person name="Piazza S."/>
            <person name="Reed J."/>
            <person name="Reid J.F."/>
            <person name="Ring B.Z."/>
            <person name="Ringwald M."/>
            <person name="Rost B."/>
            <person name="Ruan Y."/>
            <person name="Salzberg S.L."/>
            <person name="Sandelin A."/>
            <person name="Schneider C."/>
            <person name="Schoenbach C."/>
            <person name="Sekiguchi K."/>
            <person name="Semple C.A."/>
            <person name="Seno S."/>
            <person name="Sessa L."/>
            <person name="Sheng Y."/>
            <person name="Shibata Y."/>
            <person name="Shimada H."/>
            <person name="Shimada K."/>
            <person name="Silva D."/>
            <person name="Sinclair B."/>
            <person name="Sperling S."/>
            <person name="Stupka E."/>
            <person name="Sugiura K."/>
            <person name="Sultana R."/>
            <person name="Takenaka Y."/>
            <person name="Taki K."/>
            <person name="Tammoja K."/>
            <person name="Tan S.L."/>
            <person name="Tang S."/>
            <person name="Taylor M.S."/>
            <person name="Tegner J."/>
            <person name="Teichmann S.A."/>
            <person name="Ueda H.R."/>
            <person name="van Nimwegen E."/>
            <person name="Verardo R."/>
            <person name="Wei C.L."/>
            <person name="Yagi K."/>
            <person name="Yamanishi H."/>
            <person name="Zabarovsky E."/>
            <person name="Zhu S."/>
            <person name="Zimmer A."/>
            <person name="Hide W."/>
            <person name="Bult C."/>
            <person name="Grimmond S.M."/>
            <person name="Teasdale R.D."/>
            <person name="Liu E.T."/>
            <person name="Brusic V."/>
            <person name="Quackenbush J."/>
            <person name="Wahlestedt C."/>
            <person name="Mattick J.S."/>
            <person name="Hume D.A."/>
            <person name="Kai C."/>
            <person name="Sasaki D."/>
            <person name="Tomaru Y."/>
            <person name="Fukuda S."/>
            <person name="Kanamori-Katayama M."/>
            <person name="Suzuki M."/>
            <person name="Aoki J."/>
            <person name="Arakawa T."/>
            <person name="Iida J."/>
            <person name="Imamura K."/>
            <person name="Itoh M."/>
            <person name="Kato T."/>
            <person name="Kawaji H."/>
            <person name="Kawagashira N."/>
            <person name="Kawashima T."/>
            <person name="Kojima M."/>
            <person name="Kondo S."/>
            <person name="Konno H."/>
            <person name="Nakano K."/>
            <person name="Ninomiya N."/>
            <person name="Nishio T."/>
            <person name="Okada M."/>
            <person name="Plessy C."/>
            <person name="Shibata K."/>
            <person name="Shiraki T."/>
            <person name="Suzuki S."/>
            <person name="Tagami M."/>
            <person name="Waki K."/>
            <person name="Watahiki A."/>
            <person name="Okamura-Oho Y."/>
            <person name="Suzuki H."/>
            <person name="Kawai J."/>
            <person name="Hayashizaki Y."/>
        </authorList>
    </citation>
    <scope>NUCLEOTIDE SEQUENCE [LARGE SCALE MRNA]</scope>
    <source>
        <strain>C57BL/6J</strain>
        <tissue>Cerebellum</tissue>
        <tissue>Embryo</tissue>
    </source>
</reference>
<reference key="3">
    <citation type="journal article" date="2004" name="Genome Res.">
        <title>The status, quality, and expansion of the NIH full-length cDNA project: the Mammalian Gene Collection (MGC).</title>
        <authorList>
            <consortium name="The MGC Project Team"/>
        </authorList>
    </citation>
    <scope>NUCLEOTIDE SEQUENCE [LARGE SCALE MRNA]</scope>
    <source>
        <tissue>Mammary tumor</tissue>
    </source>
</reference>
<reference key="4">
    <citation type="journal article" date="2000" name="J. Biol. Chem.">
        <title>A novel RalGEF-like protein, RGL3, as a candidate effector for rit and Ras.</title>
        <authorList>
            <person name="Shao H."/>
            <person name="Andres D.A."/>
        </authorList>
    </citation>
    <scope>INTERACTION WITH RGL3</scope>
</reference>
<reference key="5">
    <citation type="journal article" date="2010" name="Cell">
        <title>A tissue-specific atlas of mouse protein phosphorylation and expression.</title>
        <authorList>
            <person name="Huttlin E.L."/>
            <person name="Jedrychowski M.P."/>
            <person name="Elias J.E."/>
            <person name="Goswami T."/>
            <person name="Rad R."/>
            <person name="Beausoleil S.A."/>
            <person name="Villen J."/>
            <person name="Haas W."/>
            <person name="Sowa M.E."/>
            <person name="Gygi S.P."/>
        </authorList>
    </citation>
    <scope>IDENTIFICATION BY MASS SPECTROMETRY [LARGE SCALE ANALYSIS]</scope>
    <source>
        <tissue>Kidney</tissue>
    </source>
</reference>
<dbReference type="EC" id="3.6.5.2" evidence="2"/>
<dbReference type="EMBL" id="U71205">
    <property type="protein sequence ID" value="AAB42215.1"/>
    <property type="molecule type" value="mRNA"/>
</dbReference>
<dbReference type="EMBL" id="AK005357">
    <property type="protein sequence ID" value="BAB23972.1"/>
    <property type="molecule type" value="mRNA"/>
</dbReference>
<dbReference type="EMBL" id="AK014126">
    <property type="protein sequence ID" value="BAB29168.1"/>
    <property type="molecule type" value="mRNA"/>
</dbReference>
<dbReference type="EMBL" id="BC012694">
    <property type="protein sequence ID" value="AAH12694.1"/>
    <property type="molecule type" value="mRNA"/>
</dbReference>
<dbReference type="CCDS" id="CCDS17484.1"/>
<dbReference type="RefSeq" id="NP_001390950.1">
    <property type="nucleotide sequence ID" value="NM_001404021.1"/>
</dbReference>
<dbReference type="RefSeq" id="NP_001390951.1">
    <property type="nucleotide sequence ID" value="NM_001404022.1"/>
</dbReference>
<dbReference type="RefSeq" id="NP_033095.1">
    <property type="nucleotide sequence ID" value="NM_009069.5"/>
</dbReference>
<dbReference type="RefSeq" id="XP_006501223.1">
    <property type="nucleotide sequence ID" value="XM_006501160.3"/>
</dbReference>
<dbReference type="SMR" id="P70426"/>
<dbReference type="BioGRID" id="202897">
    <property type="interactions" value="3"/>
</dbReference>
<dbReference type="FunCoup" id="P70426">
    <property type="interactions" value="916"/>
</dbReference>
<dbReference type="IntAct" id="P70426">
    <property type="interactions" value="1"/>
</dbReference>
<dbReference type="STRING" id="10090.ENSMUSP00000029692"/>
<dbReference type="iPTMnet" id="P70426"/>
<dbReference type="PhosphoSitePlus" id="P70426"/>
<dbReference type="PaxDb" id="10090-ENSMUSP00000029692"/>
<dbReference type="PeptideAtlas" id="P70426"/>
<dbReference type="ProteomicsDB" id="255154"/>
<dbReference type="Pumba" id="P70426"/>
<dbReference type="Antibodypedia" id="20423">
    <property type="antibodies" value="244 antibodies from 30 providers"/>
</dbReference>
<dbReference type="DNASU" id="19769"/>
<dbReference type="Ensembl" id="ENSMUST00000029692.15">
    <property type="protein sequence ID" value="ENSMUSP00000029692.9"/>
    <property type="gene ID" value="ENSMUSG00000028057.15"/>
</dbReference>
<dbReference type="GeneID" id="19769"/>
<dbReference type="KEGG" id="mmu:19769"/>
<dbReference type="UCSC" id="uc008pwh.2">
    <property type="organism name" value="mouse"/>
</dbReference>
<dbReference type="AGR" id="MGI:108053"/>
<dbReference type="CTD" id="6016"/>
<dbReference type="MGI" id="MGI:108053">
    <property type="gene designation" value="Rit1"/>
</dbReference>
<dbReference type="VEuPathDB" id="HostDB:ENSMUSG00000028057"/>
<dbReference type="eggNOG" id="KOG0395">
    <property type="taxonomic scope" value="Eukaryota"/>
</dbReference>
<dbReference type="GeneTree" id="ENSGT00940000160132"/>
<dbReference type="InParanoid" id="P70426"/>
<dbReference type="OMA" id="HEVRDFK"/>
<dbReference type="OrthoDB" id="5976022at2759"/>
<dbReference type="PhylomeDB" id="P70426"/>
<dbReference type="TreeFam" id="TF315072"/>
<dbReference type="BioGRID-ORCS" id="19769">
    <property type="hits" value="1 hit in 78 CRISPR screens"/>
</dbReference>
<dbReference type="ChiTaRS" id="Rit1">
    <property type="organism name" value="mouse"/>
</dbReference>
<dbReference type="PRO" id="PR:P70426"/>
<dbReference type="Proteomes" id="UP000000589">
    <property type="component" value="Chromosome 3"/>
</dbReference>
<dbReference type="RNAct" id="P70426">
    <property type="molecule type" value="protein"/>
</dbReference>
<dbReference type="Bgee" id="ENSMUSG00000028057">
    <property type="expression patterns" value="Expressed in granulocyte and 272 other cell types or tissues"/>
</dbReference>
<dbReference type="ExpressionAtlas" id="P70426">
    <property type="expression patterns" value="baseline and differential"/>
</dbReference>
<dbReference type="GO" id="GO:0005886">
    <property type="term" value="C:plasma membrane"/>
    <property type="evidence" value="ECO:0000314"/>
    <property type="project" value="MGI"/>
</dbReference>
<dbReference type="GO" id="GO:0003925">
    <property type="term" value="F:G protein activity"/>
    <property type="evidence" value="ECO:0007669"/>
    <property type="project" value="UniProtKB-EC"/>
</dbReference>
<dbReference type="GO" id="GO:0005525">
    <property type="term" value="F:GTP binding"/>
    <property type="evidence" value="ECO:0000314"/>
    <property type="project" value="MGI"/>
</dbReference>
<dbReference type="GO" id="GO:0007265">
    <property type="term" value="P:Ras protein signal transduction"/>
    <property type="evidence" value="ECO:0007669"/>
    <property type="project" value="Ensembl"/>
</dbReference>
<dbReference type="CDD" id="cd04141">
    <property type="entry name" value="Rit_Rin_Ric"/>
    <property type="match status" value="1"/>
</dbReference>
<dbReference type="FunFam" id="3.40.50.300:FF:000343">
    <property type="entry name" value="Ras family gtpase"/>
    <property type="match status" value="1"/>
</dbReference>
<dbReference type="Gene3D" id="3.40.50.300">
    <property type="entry name" value="P-loop containing nucleotide triphosphate hydrolases"/>
    <property type="match status" value="1"/>
</dbReference>
<dbReference type="InterPro" id="IPR027417">
    <property type="entry name" value="P-loop_NTPase"/>
</dbReference>
<dbReference type="InterPro" id="IPR005225">
    <property type="entry name" value="Small_GTP-bd"/>
</dbReference>
<dbReference type="InterPro" id="IPR001806">
    <property type="entry name" value="Small_GTPase"/>
</dbReference>
<dbReference type="InterPro" id="IPR020849">
    <property type="entry name" value="Small_GTPase_Ras-type"/>
</dbReference>
<dbReference type="NCBIfam" id="TIGR00231">
    <property type="entry name" value="small_GTP"/>
    <property type="match status" value="1"/>
</dbReference>
<dbReference type="PANTHER" id="PTHR24070">
    <property type="entry name" value="RAS, DI-RAS, AND RHEB FAMILY MEMBERS OF SMALL GTPASE SUPERFAMILY"/>
    <property type="match status" value="1"/>
</dbReference>
<dbReference type="Pfam" id="PF00071">
    <property type="entry name" value="Ras"/>
    <property type="match status" value="1"/>
</dbReference>
<dbReference type="PRINTS" id="PR00449">
    <property type="entry name" value="RASTRNSFRMNG"/>
</dbReference>
<dbReference type="SMART" id="SM00175">
    <property type="entry name" value="RAB"/>
    <property type="match status" value="1"/>
</dbReference>
<dbReference type="SMART" id="SM00176">
    <property type="entry name" value="RAN"/>
    <property type="match status" value="1"/>
</dbReference>
<dbReference type="SMART" id="SM00173">
    <property type="entry name" value="RAS"/>
    <property type="match status" value="1"/>
</dbReference>
<dbReference type="SMART" id="SM00174">
    <property type="entry name" value="RHO"/>
    <property type="match status" value="1"/>
</dbReference>
<dbReference type="SUPFAM" id="SSF52540">
    <property type="entry name" value="P-loop containing nucleoside triphosphate hydrolases"/>
    <property type="match status" value="1"/>
</dbReference>
<dbReference type="PROSITE" id="PS51421">
    <property type="entry name" value="RAS"/>
    <property type="match status" value="1"/>
</dbReference>
<evidence type="ECO:0000250" key="1"/>
<evidence type="ECO:0000250" key="2">
    <source>
        <dbReference type="UniProtKB" id="Q92963"/>
    </source>
</evidence>
<evidence type="ECO:0000269" key="3">
    <source>
    </source>
</evidence>
<evidence type="ECO:0000305" key="4"/>